<feature type="chain" id="PRO_1000047675" description="Aminomethyltransferase">
    <location>
        <begin position="1"/>
        <end position="360"/>
    </location>
</feature>
<sequence length="360" mass="39483">MTAKTPLHTTHLACGAKMVDFHGWDMPLHYGSQLNEHHAVRNDAGMFDVSHMTIVDILGAGGRQFLRKLLTNDVDQITHNGKALYSCMCNEHGGIIDDLIVYQRASDNYRVVLNSATRQNDVAWIRAKSEGFAVGLQERRELSMLAVQGPNAIAKTLSILAPAHVDAVSTLTPFECVDVDHWFFARTGYTGEDGLEIIVPNEFITQLWNDLLNAGVTPCGLGARDTLRLEAGMLLYGQDMDETTTPLESGLAWTVKWEPEDRGFIGMGALVSQKQQGIKRKMVGLTLLDKGIMRHGQKVIIEGCPDGIITSGSYSPTLQQSIALARVPVETGEQVLVDIRGKLIPAKVGKPRFIKQGKPV</sequence>
<dbReference type="EC" id="2.1.2.10" evidence="1"/>
<dbReference type="EMBL" id="CP000675">
    <property type="protein sequence ID" value="ABQ54137.1"/>
    <property type="molecule type" value="Genomic_DNA"/>
</dbReference>
<dbReference type="RefSeq" id="WP_011945316.1">
    <property type="nucleotide sequence ID" value="NZ_JAPMSS010000003.1"/>
</dbReference>
<dbReference type="SMR" id="A5I9T7"/>
<dbReference type="KEGG" id="lpc:LPC_0138"/>
<dbReference type="HOGENOM" id="CLU_007884_10_2_6"/>
<dbReference type="GO" id="GO:0005829">
    <property type="term" value="C:cytosol"/>
    <property type="evidence" value="ECO:0007669"/>
    <property type="project" value="TreeGrafter"/>
</dbReference>
<dbReference type="GO" id="GO:0005960">
    <property type="term" value="C:glycine cleavage complex"/>
    <property type="evidence" value="ECO:0007669"/>
    <property type="project" value="InterPro"/>
</dbReference>
<dbReference type="GO" id="GO:0004047">
    <property type="term" value="F:aminomethyltransferase activity"/>
    <property type="evidence" value="ECO:0007669"/>
    <property type="project" value="UniProtKB-UniRule"/>
</dbReference>
<dbReference type="GO" id="GO:0008483">
    <property type="term" value="F:transaminase activity"/>
    <property type="evidence" value="ECO:0007669"/>
    <property type="project" value="UniProtKB-KW"/>
</dbReference>
<dbReference type="GO" id="GO:0019464">
    <property type="term" value="P:glycine decarboxylation via glycine cleavage system"/>
    <property type="evidence" value="ECO:0007669"/>
    <property type="project" value="UniProtKB-UniRule"/>
</dbReference>
<dbReference type="FunFam" id="3.30.70.1400:FF:000001">
    <property type="entry name" value="Aminomethyltransferase"/>
    <property type="match status" value="1"/>
</dbReference>
<dbReference type="FunFam" id="4.10.1250.10:FF:000001">
    <property type="entry name" value="Aminomethyltransferase"/>
    <property type="match status" value="1"/>
</dbReference>
<dbReference type="Gene3D" id="2.40.30.110">
    <property type="entry name" value="Aminomethyltransferase beta-barrel domains"/>
    <property type="match status" value="1"/>
</dbReference>
<dbReference type="Gene3D" id="3.30.70.1400">
    <property type="entry name" value="Aminomethyltransferase beta-barrel domains"/>
    <property type="match status" value="1"/>
</dbReference>
<dbReference type="Gene3D" id="4.10.1250.10">
    <property type="entry name" value="Aminomethyltransferase fragment"/>
    <property type="match status" value="1"/>
</dbReference>
<dbReference type="Gene3D" id="3.30.1360.120">
    <property type="entry name" value="Probable tRNA modification gtpase trme, domain 1"/>
    <property type="match status" value="1"/>
</dbReference>
<dbReference type="HAMAP" id="MF_00259">
    <property type="entry name" value="GcvT"/>
    <property type="match status" value="1"/>
</dbReference>
<dbReference type="InterPro" id="IPR006223">
    <property type="entry name" value="GCS_T"/>
</dbReference>
<dbReference type="InterPro" id="IPR022903">
    <property type="entry name" value="GCS_T_bac"/>
</dbReference>
<dbReference type="InterPro" id="IPR013977">
    <property type="entry name" value="GCST_C"/>
</dbReference>
<dbReference type="InterPro" id="IPR006222">
    <property type="entry name" value="GCV_T_N"/>
</dbReference>
<dbReference type="InterPro" id="IPR028896">
    <property type="entry name" value="GcvT/YgfZ/DmdA"/>
</dbReference>
<dbReference type="InterPro" id="IPR029043">
    <property type="entry name" value="GcvT/YgfZ_C"/>
</dbReference>
<dbReference type="InterPro" id="IPR027266">
    <property type="entry name" value="TrmE/GcvT_dom1"/>
</dbReference>
<dbReference type="NCBIfam" id="TIGR00528">
    <property type="entry name" value="gcvT"/>
    <property type="match status" value="1"/>
</dbReference>
<dbReference type="NCBIfam" id="NF001567">
    <property type="entry name" value="PRK00389.1"/>
    <property type="match status" value="1"/>
</dbReference>
<dbReference type="PANTHER" id="PTHR43757">
    <property type="entry name" value="AMINOMETHYLTRANSFERASE"/>
    <property type="match status" value="1"/>
</dbReference>
<dbReference type="PANTHER" id="PTHR43757:SF2">
    <property type="entry name" value="AMINOMETHYLTRANSFERASE, MITOCHONDRIAL"/>
    <property type="match status" value="1"/>
</dbReference>
<dbReference type="Pfam" id="PF01571">
    <property type="entry name" value="GCV_T"/>
    <property type="match status" value="1"/>
</dbReference>
<dbReference type="Pfam" id="PF08669">
    <property type="entry name" value="GCV_T_C"/>
    <property type="match status" value="1"/>
</dbReference>
<dbReference type="PIRSF" id="PIRSF006487">
    <property type="entry name" value="GcvT"/>
    <property type="match status" value="1"/>
</dbReference>
<dbReference type="SUPFAM" id="SSF101790">
    <property type="entry name" value="Aminomethyltransferase beta-barrel domain"/>
    <property type="match status" value="1"/>
</dbReference>
<dbReference type="SUPFAM" id="SSF103025">
    <property type="entry name" value="Folate-binding domain"/>
    <property type="match status" value="1"/>
</dbReference>
<comment type="function">
    <text evidence="1">The glycine cleavage system catalyzes the degradation of glycine.</text>
</comment>
<comment type="catalytic activity">
    <reaction evidence="1">
        <text>N(6)-[(R)-S(8)-aminomethyldihydrolipoyl]-L-lysyl-[protein] + (6S)-5,6,7,8-tetrahydrofolate = N(6)-[(R)-dihydrolipoyl]-L-lysyl-[protein] + (6R)-5,10-methylene-5,6,7,8-tetrahydrofolate + NH4(+)</text>
        <dbReference type="Rhea" id="RHEA:16945"/>
        <dbReference type="Rhea" id="RHEA-COMP:10475"/>
        <dbReference type="Rhea" id="RHEA-COMP:10492"/>
        <dbReference type="ChEBI" id="CHEBI:15636"/>
        <dbReference type="ChEBI" id="CHEBI:28938"/>
        <dbReference type="ChEBI" id="CHEBI:57453"/>
        <dbReference type="ChEBI" id="CHEBI:83100"/>
        <dbReference type="ChEBI" id="CHEBI:83143"/>
        <dbReference type="EC" id="2.1.2.10"/>
    </reaction>
</comment>
<comment type="subunit">
    <text evidence="1">The glycine cleavage system is composed of four proteins: P, T, L and H.</text>
</comment>
<comment type="similarity">
    <text evidence="1">Belongs to the GcvT family.</text>
</comment>
<gene>
    <name evidence="1" type="primary">gcvT</name>
    <name type="ordered locus">LPC_0138</name>
</gene>
<organism>
    <name type="scientific">Legionella pneumophila (strain Corby)</name>
    <dbReference type="NCBI Taxonomy" id="400673"/>
    <lineage>
        <taxon>Bacteria</taxon>
        <taxon>Pseudomonadati</taxon>
        <taxon>Pseudomonadota</taxon>
        <taxon>Gammaproteobacteria</taxon>
        <taxon>Legionellales</taxon>
        <taxon>Legionellaceae</taxon>
        <taxon>Legionella</taxon>
    </lineage>
</organism>
<evidence type="ECO:0000255" key="1">
    <source>
        <dbReference type="HAMAP-Rule" id="MF_00259"/>
    </source>
</evidence>
<accession>A5I9T7</accession>
<protein>
    <recommendedName>
        <fullName evidence="1">Aminomethyltransferase</fullName>
        <ecNumber evidence="1">2.1.2.10</ecNumber>
    </recommendedName>
    <alternativeName>
        <fullName evidence="1">Glycine cleavage system T protein</fullName>
    </alternativeName>
</protein>
<name>GCST_LEGPC</name>
<proteinExistence type="inferred from homology"/>
<reference key="1">
    <citation type="submission" date="2006-11" db="EMBL/GenBank/DDBJ databases">
        <title>Identification and characterization of a new conjugation/ type IVA secretion system (trb/tra) of L. pneumophila Corby localized on a mobile genomic island.</title>
        <authorList>
            <person name="Gloeckner G."/>
            <person name="Albert-Weissenberger C."/>
            <person name="Weinmann E."/>
            <person name="Jacobi S."/>
            <person name="Schunder E."/>
            <person name="Steinert M."/>
            <person name="Buchrieser C."/>
            <person name="Hacker J."/>
            <person name="Heuner K."/>
        </authorList>
    </citation>
    <scope>NUCLEOTIDE SEQUENCE [LARGE SCALE GENOMIC DNA]</scope>
    <source>
        <strain>Corby</strain>
    </source>
</reference>
<keyword id="KW-0032">Aminotransferase</keyword>
<keyword id="KW-0808">Transferase</keyword>